<sequence length="346" mass="38116">MKTYNVAIVGASGAVGQELIKGLENSFFPIKKFVPLASTRSAGKKIKAFNKDYEILETTHEVFEREKIDIAFFSAGGSVSEEFATSASKTALVVDNTSFFRLNKDVPLVVPEINAKEIFNAPLNIIANPNCSTIQMTQILNPLHLHFKIKSVIVSTYQAVSGAGNKGIESLKNELKTALECLEKDPTIDLNQVLQAGAFAYPIAFNAIAHIDTFKENGYTKEELKMLHETHKIMGVDFPISATCVRVPVLRSHSESLSIAFEKEFDLKEVYEVLKNAPSVAVCDDPSHNLYPTPLKASHTDSVFIGRLRKDLFDKKTLHGFCVADQLRVGAATNALKIALHYIKNA</sequence>
<name>DHAS_HELPY</name>
<keyword id="KW-0028">Amino-acid biosynthesis</keyword>
<keyword id="KW-0220">Diaminopimelate biosynthesis</keyword>
<keyword id="KW-0457">Lysine biosynthesis</keyword>
<keyword id="KW-0486">Methionine biosynthesis</keyword>
<keyword id="KW-0521">NADP</keyword>
<keyword id="KW-0560">Oxidoreductase</keyword>
<keyword id="KW-1185">Reference proteome</keyword>
<keyword id="KW-0791">Threonine biosynthesis</keyword>
<organism>
    <name type="scientific">Helicobacter pylori (strain ATCC 700392 / 26695)</name>
    <name type="common">Campylobacter pylori</name>
    <dbReference type="NCBI Taxonomy" id="85962"/>
    <lineage>
        <taxon>Bacteria</taxon>
        <taxon>Pseudomonadati</taxon>
        <taxon>Campylobacterota</taxon>
        <taxon>Epsilonproteobacteria</taxon>
        <taxon>Campylobacterales</taxon>
        <taxon>Helicobacteraceae</taxon>
        <taxon>Helicobacter</taxon>
    </lineage>
</organism>
<proteinExistence type="inferred from homology"/>
<feature type="chain" id="PRO_0000141376" description="Aspartate-semialdehyde dehydrogenase">
    <location>
        <begin position="1"/>
        <end position="346"/>
    </location>
</feature>
<feature type="active site" description="Acyl-thioester intermediate" evidence="1">
    <location>
        <position position="131"/>
    </location>
</feature>
<feature type="active site" description="Proton acceptor" evidence="1">
    <location>
        <position position="253"/>
    </location>
</feature>
<feature type="binding site" evidence="1">
    <location>
        <begin position="12"/>
        <end position="15"/>
    </location>
    <ligand>
        <name>NADP(+)</name>
        <dbReference type="ChEBI" id="CHEBI:58349"/>
    </ligand>
</feature>
<feature type="binding site" evidence="1">
    <location>
        <begin position="40"/>
        <end position="41"/>
    </location>
    <ligand>
        <name>NADP(+)</name>
        <dbReference type="ChEBI" id="CHEBI:58349"/>
    </ligand>
</feature>
<feature type="binding site" evidence="1">
    <location>
        <position position="101"/>
    </location>
    <ligand>
        <name>phosphate</name>
        <dbReference type="ChEBI" id="CHEBI:43474"/>
    </ligand>
</feature>
<feature type="binding site" evidence="1">
    <location>
        <position position="158"/>
    </location>
    <ligand>
        <name>substrate</name>
    </ligand>
</feature>
<feature type="binding site" evidence="1">
    <location>
        <begin position="161"/>
        <end position="162"/>
    </location>
    <ligand>
        <name>NADP(+)</name>
        <dbReference type="ChEBI" id="CHEBI:58349"/>
    </ligand>
</feature>
<feature type="binding site" evidence="1">
    <location>
        <position position="225"/>
    </location>
    <ligand>
        <name>phosphate</name>
        <dbReference type="ChEBI" id="CHEBI:43474"/>
    </ligand>
</feature>
<feature type="binding site" evidence="1">
    <location>
        <position position="246"/>
    </location>
    <ligand>
        <name>substrate</name>
    </ligand>
</feature>
<feature type="binding site" evidence="1">
    <location>
        <position position="326"/>
    </location>
    <ligand>
        <name>NADP(+)</name>
        <dbReference type="ChEBI" id="CHEBI:58349"/>
    </ligand>
</feature>
<gene>
    <name evidence="1" type="primary">asd</name>
    <name type="ordered locus">HP_1189</name>
</gene>
<dbReference type="EC" id="1.2.1.11" evidence="1"/>
<dbReference type="EMBL" id="AE000511">
    <property type="protein sequence ID" value="AAD08235.1"/>
    <property type="molecule type" value="Genomic_DNA"/>
</dbReference>
<dbReference type="PIR" id="E64668">
    <property type="entry name" value="E64668"/>
</dbReference>
<dbReference type="RefSeq" id="NP_207980.1">
    <property type="nucleotide sequence ID" value="NC_000915.1"/>
</dbReference>
<dbReference type="RefSeq" id="WP_000860874.1">
    <property type="nucleotide sequence ID" value="NC_018939.1"/>
</dbReference>
<dbReference type="SMR" id="O25801"/>
<dbReference type="DIP" id="DIP-3753N"/>
<dbReference type="FunCoup" id="O25801">
    <property type="interactions" value="340"/>
</dbReference>
<dbReference type="IntAct" id="O25801">
    <property type="interactions" value="1"/>
</dbReference>
<dbReference type="MINT" id="O25801"/>
<dbReference type="STRING" id="85962.HP_1189"/>
<dbReference type="BindingDB" id="O25801"/>
<dbReference type="ChEMBL" id="CHEMBL5687"/>
<dbReference type="PaxDb" id="85962-C694_06155"/>
<dbReference type="EnsemblBacteria" id="AAD08235">
    <property type="protein sequence ID" value="AAD08235"/>
    <property type="gene ID" value="HP_1189"/>
</dbReference>
<dbReference type="KEGG" id="heo:C694_06155"/>
<dbReference type="KEGG" id="hpy:HP_1189"/>
<dbReference type="PATRIC" id="fig|85962.47.peg.1279"/>
<dbReference type="eggNOG" id="COG0136">
    <property type="taxonomic scope" value="Bacteria"/>
</dbReference>
<dbReference type="InParanoid" id="O25801"/>
<dbReference type="OrthoDB" id="9805684at2"/>
<dbReference type="PhylomeDB" id="O25801"/>
<dbReference type="BRENDA" id="1.2.1.11">
    <property type="organism ID" value="2604"/>
</dbReference>
<dbReference type="UniPathway" id="UPA00034">
    <property type="reaction ID" value="UER00016"/>
</dbReference>
<dbReference type="UniPathway" id="UPA00050">
    <property type="reaction ID" value="UER00463"/>
</dbReference>
<dbReference type="UniPathway" id="UPA00051">
    <property type="reaction ID" value="UER00464"/>
</dbReference>
<dbReference type="Proteomes" id="UP000000429">
    <property type="component" value="Chromosome"/>
</dbReference>
<dbReference type="GO" id="GO:0004073">
    <property type="term" value="F:aspartate-semialdehyde dehydrogenase activity"/>
    <property type="evidence" value="ECO:0007669"/>
    <property type="project" value="UniProtKB-UniRule"/>
</dbReference>
<dbReference type="GO" id="GO:0051287">
    <property type="term" value="F:NAD binding"/>
    <property type="evidence" value="ECO:0007669"/>
    <property type="project" value="InterPro"/>
</dbReference>
<dbReference type="GO" id="GO:0050661">
    <property type="term" value="F:NADP binding"/>
    <property type="evidence" value="ECO:0007669"/>
    <property type="project" value="UniProtKB-UniRule"/>
</dbReference>
<dbReference type="GO" id="GO:0046983">
    <property type="term" value="F:protein dimerization activity"/>
    <property type="evidence" value="ECO:0007669"/>
    <property type="project" value="InterPro"/>
</dbReference>
<dbReference type="GO" id="GO:0071266">
    <property type="term" value="P:'de novo' L-methionine biosynthetic process"/>
    <property type="evidence" value="ECO:0007669"/>
    <property type="project" value="UniProtKB-UniRule"/>
</dbReference>
<dbReference type="GO" id="GO:0019877">
    <property type="term" value="P:diaminopimelate biosynthetic process"/>
    <property type="evidence" value="ECO:0007669"/>
    <property type="project" value="UniProtKB-UniRule"/>
</dbReference>
<dbReference type="GO" id="GO:0009097">
    <property type="term" value="P:isoleucine biosynthetic process"/>
    <property type="evidence" value="ECO:0007669"/>
    <property type="project" value="InterPro"/>
</dbReference>
<dbReference type="GO" id="GO:0009089">
    <property type="term" value="P:lysine biosynthetic process via diaminopimelate"/>
    <property type="evidence" value="ECO:0007669"/>
    <property type="project" value="UniProtKB-UniRule"/>
</dbReference>
<dbReference type="GO" id="GO:0009088">
    <property type="term" value="P:threonine biosynthetic process"/>
    <property type="evidence" value="ECO:0007669"/>
    <property type="project" value="UniProtKB-UniRule"/>
</dbReference>
<dbReference type="CDD" id="cd18131">
    <property type="entry name" value="ASADH_C_bac_euk_like"/>
    <property type="match status" value="1"/>
</dbReference>
<dbReference type="CDD" id="cd02316">
    <property type="entry name" value="VcASADH2_like_N"/>
    <property type="match status" value="1"/>
</dbReference>
<dbReference type="Gene3D" id="3.30.360.10">
    <property type="entry name" value="Dihydrodipicolinate Reductase, domain 2"/>
    <property type="match status" value="1"/>
</dbReference>
<dbReference type="Gene3D" id="3.40.50.720">
    <property type="entry name" value="NAD(P)-binding Rossmann-like Domain"/>
    <property type="match status" value="1"/>
</dbReference>
<dbReference type="HAMAP" id="MF_02121">
    <property type="entry name" value="ASADH"/>
    <property type="match status" value="1"/>
</dbReference>
<dbReference type="InterPro" id="IPR000319">
    <property type="entry name" value="Asp-semialdehyde_DH_CS"/>
</dbReference>
<dbReference type="InterPro" id="IPR012080">
    <property type="entry name" value="Asp_semialdehyde_DH"/>
</dbReference>
<dbReference type="InterPro" id="IPR005986">
    <property type="entry name" value="Asp_semialdehyde_DH_beta"/>
</dbReference>
<dbReference type="InterPro" id="IPR036291">
    <property type="entry name" value="NAD(P)-bd_dom_sf"/>
</dbReference>
<dbReference type="InterPro" id="IPR000534">
    <property type="entry name" value="Semialdehyde_DH_NAD-bd"/>
</dbReference>
<dbReference type="InterPro" id="IPR012280">
    <property type="entry name" value="Semialdhyde_DH_dimer_dom"/>
</dbReference>
<dbReference type="NCBIfam" id="TIGR01296">
    <property type="entry name" value="asd_B"/>
    <property type="match status" value="1"/>
</dbReference>
<dbReference type="NCBIfam" id="NF011456">
    <property type="entry name" value="PRK14874.1"/>
    <property type="match status" value="1"/>
</dbReference>
<dbReference type="PANTHER" id="PTHR46278:SF2">
    <property type="entry name" value="ASPARTATE-SEMIALDEHYDE DEHYDROGENASE"/>
    <property type="match status" value="1"/>
</dbReference>
<dbReference type="PANTHER" id="PTHR46278">
    <property type="entry name" value="DEHYDROGENASE, PUTATIVE-RELATED"/>
    <property type="match status" value="1"/>
</dbReference>
<dbReference type="Pfam" id="PF01118">
    <property type="entry name" value="Semialdhyde_dh"/>
    <property type="match status" value="1"/>
</dbReference>
<dbReference type="Pfam" id="PF02774">
    <property type="entry name" value="Semialdhyde_dhC"/>
    <property type="match status" value="1"/>
</dbReference>
<dbReference type="PIRSF" id="PIRSF000148">
    <property type="entry name" value="ASA_dh"/>
    <property type="match status" value="1"/>
</dbReference>
<dbReference type="SMART" id="SM00859">
    <property type="entry name" value="Semialdhyde_dh"/>
    <property type="match status" value="1"/>
</dbReference>
<dbReference type="SUPFAM" id="SSF55347">
    <property type="entry name" value="Glyceraldehyde-3-phosphate dehydrogenase-like, C-terminal domain"/>
    <property type="match status" value="1"/>
</dbReference>
<dbReference type="SUPFAM" id="SSF51735">
    <property type="entry name" value="NAD(P)-binding Rossmann-fold domains"/>
    <property type="match status" value="1"/>
</dbReference>
<dbReference type="PROSITE" id="PS01103">
    <property type="entry name" value="ASD"/>
    <property type="match status" value="1"/>
</dbReference>
<comment type="function">
    <text evidence="1">Catalyzes the NADPH-dependent formation of L-aspartate-semialdehyde (L-ASA) by the reductive dephosphorylation of L-aspartyl-4-phosphate.</text>
</comment>
<comment type="catalytic activity">
    <reaction evidence="1">
        <text>L-aspartate 4-semialdehyde + phosphate + NADP(+) = 4-phospho-L-aspartate + NADPH + H(+)</text>
        <dbReference type="Rhea" id="RHEA:24284"/>
        <dbReference type="ChEBI" id="CHEBI:15378"/>
        <dbReference type="ChEBI" id="CHEBI:43474"/>
        <dbReference type="ChEBI" id="CHEBI:57535"/>
        <dbReference type="ChEBI" id="CHEBI:57783"/>
        <dbReference type="ChEBI" id="CHEBI:58349"/>
        <dbReference type="ChEBI" id="CHEBI:537519"/>
        <dbReference type="EC" id="1.2.1.11"/>
    </reaction>
</comment>
<comment type="pathway">
    <text evidence="1">Amino-acid biosynthesis; L-lysine biosynthesis via DAP pathway; (S)-tetrahydrodipicolinate from L-aspartate: step 2/4.</text>
</comment>
<comment type="pathway">
    <text evidence="1">Amino-acid biosynthesis; L-methionine biosynthesis via de novo pathway; L-homoserine from L-aspartate: step 2/3.</text>
</comment>
<comment type="pathway">
    <text evidence="1">Amino-acid biosynthesis; L-threonine biosynthesis; L-threonine from L-aspartate: step 2/5.</text>
</comment>
<comment type="subunit">
    <text evidence="1">Homodimer.</text>
</comment>
<comment type="similarity">
    <text evidence="1">Belongs to the aspartate-semialdehyde dehydrogenase family.</text>
</comment>
<evidence type="ECO:0000255" key="1">
    <source>
        <dbReference type="HAMAP-Rule" id="MF_02121"/>
    </source>
</evidence>
<accession>O25801</accession>
<protein>
    <recommendedName>
        <fullName evidence="1">Aspartate-semialdehyde dehydrogenase</fullName>
        <shortName evidence="1">ASA dehydrogenase</shortName>
        <shortName evidence="1">ASADH</shortName>
        <ecNumber evidence="1">1.2.1.11</ecNumber>
    </recommendedName>
    <alternativeName>
        <fullName evidence="1">Aspartate-beta-semialdehyde dehydrogenase</fullName>
    </alternativeName>
</protein>
<reference key="1">
    <citation type="journal article" date="1997" name="Nature">
        <title>The complete genome sequence of the gastric pathogen Helicobacter pylori.</title>
        <authorList>
            <person name="Tomb J.-F."/>
            <person name="White O."/>
            <person name="Kerlavage A.R."/>
            <person name="Clayton R.A."/>
            <person name="Sutton G.G."/>
            <person name="Fleischmann R.D."/>
            <person name="Ketchum K.A."/>
            <person name="Klenk H.-P."/>
            <person name="Gill S.R."/>
            <person name="Dougherty B.A."/>
            <person name="Nelson K.E."/>
            <person name="Quackenbush J."/>
            <person name="Zhou L."/>
            <person name="Kirkness E.F."/>
            <person name="Peterson S.N."/>
            <person name="Loftus B.J."/>
            <person name="Richardson D.L."/>
            <person name="Dodson R.J."/>
            <person name="Khalak H.G."/>
            <person name="Glodek A."/>
            <person name="McKenney K."/>
            <person name="FitzGerald L.M."/>
            <person name="Lee N."/>
            <person name="Adams M.D."/>
            <person name="Hickey E.K."/>
            <person name="Berg D.E."/>
            <person name="Gocayne J.D."/>
            <person name="Utterback T.R."/>
            <person name="Peterson J.D."/>
            <person name="Kelley J.M."/>
            <person name="Cotton M.D."/>
            <person name="Weidman J.F."/>
            <person name="Fujii C."/>
            <person name="Bowman C."/>
            <person name="Watthey L."/>
            <person name="Wallin E."/>
            <person name="Hayes W.S."/>
            <person name="Borodovsky M."/>
            <person name="Karp P.D."/>
            <person name="Smith H.O."/>
            <person name="Fraser C.M."/>
            <person name="Venter J.C."/>
        </authorList>
    </citation>
    <scope>NUCLEOTIDE SEQUENCE [LARGE SCALE GENOMIC DNA]</scope>
    <source>
        <strain>ATCC 700392 / 26695</strain>
    </source>
</reference>